<keyword id="KW-1185">Reference proteome</keyword>
<keyword id="KW-0687">Ribonucleoprotein</keyword>
<keyword id="KW-0689">Ribosomal protein</keyword>
<keyword id="KW-0694">RNA-binding</keyword>
<keyword id="KW-0699">rRNA-binding</keyword>
<proteinExistence type="inferred from homology"/>
<organism>
    <name type="scientific">Methanocaldococcus jannaschii (strain ATCC 43067 / DSM 2661 / JAL-1 / JCM 10045 / NBRC 100440)</name>
    <name type="common">Methanococcus jannaschii</name>
    <dbReference type="NCBI Taxonomy" id="243232"/>
    <lineage>
        <taxon>Archaea</taxon>
        <taxon>Methanobacteriati</taxon>
        <taxon>Methanobacteriota</taxon>
        <taxon>Methanomada group</taxon>
        <taxon>Methanococci</taxon>
        <taxon>Methanococcales</taxon>
        <taxon>Methanocaldococcaceae</taxon>
        <taxon>Methanocaldococcus</taxon>
    </lineage>
</organism>
<gene>
    <name evidence="1" type="primary">rpl18</name>
    <name type="ordered locus">MJ0474</name>
</gene>
<protein>
    <recommendedName>
        <fullName evidence="1">Large ribosomal subunit protein uL18</fullName>
    </recommendedName>
    <alternativeName>
        <fullName evidence="2">50S ribosomal protein L18</fullName>
    </alternativeName>
</protein>
<accession>P54044</accession>
<name>RL18_METJA</name>
<comment type="function">
    <text evidence="1">This is one of the proteins that bind and probably mediate the attachment of the 5S RNA into the large ribosomal subunit, where it forms part of the central protuberance.</text>
</comment>
<comment type="subunit">
    <text evidence="1">Part of the 50S ribosomal subunit. Contacts the 5S and 23S rRNAs.</text>
</comment>
<comment type="similarity">
    <text evidence="1">Belongs to the universal ribosomal protein uL18 family.</text>
</comment>
<dbReference type="EMBL" id="L77117">
    <property type="protein sequence ID" value="AAB98463.1"/>
    <property type="molecule type" value="Genomic_DNA"/>
</dbReference>
<dbReference type="PIR" id="B64359">
    <property type="entry name" value="B64359"/>
</dbReference>
<dbReference type="RefSeq" id="WP_010869975.1">
    <property type="nucleotide sequence ID" value="NC_000909.1"/>
</dbReference>
<dbReference type="SMR" id="P54044"/>
<dbReference type="FunCoup" id="P54044">
    <property type="interactions" value="189"/>
</dbReference>
<dbReference type="STRING" id="243232.MJ_0474"/>
<dbReference type="PaxDb" id="243232-MJ_0474"/>
<dbReference type="EnsemblBacteria" id="AAB98463">
    <property type="protein sequence ID" value="AAB98463"/>
    <property type="gene ID" value="MJ_0474"/>
</dbReference>
<dbReference type="GeneID" id="1451336"/>
<dbReference type="KEGG" id="mja:MJ_0474"/>
<dbReference type="eggNOG" id="arCOG04088">
    <property type="taxonomic scope" value="Archaea"/>
</dbReference>
<dbReference type="HOGENOM" id="CLU_056222_2_0_2"/>
<dbReference type="InParanoid" id="P54044"/>
<dbReference type="OrthoDB" id="8644at2157"/>
<dbReference type="PhylomeDB" id="P54044"/>
<dbReference type="Proteomes" id="UP000000805">
    <property type="component" value="Chromosome"/>
</dbReference>
<dbReference type="GO" id="GO:0022625">
    <property type="term" value="C:cytosolic large ribosomal subunit"/>
    <property type="evidence" value="ECO:0000318"/>
    <property type="project" value="GO_Central"/>
</dbReference>
<dbReference type="GO" id="GO:0008097">
    <property type="term" value="F:5S rRNA binding"/>
    <property type="evidence" value="ECO:0000318"/>
    <property type="project" value="GO_Central"/>
</dbReference>
<dbReference type="GO" id="GO:0003735">
    <property type="term" value="F:structural constituent of ribosome"/>
    <property type="evidence" value="ECO:0000318"/>
    <property type="project" value="GO_Central"/>
</dbReference>
<dbReference type="GO" id="GO:0000027">
    <property type="term" value="P:ribosomal large subunit assembly"/>
    <property type="evidence" value="ECO:0000318"/>
    <property type="project" value="GO_Central"/>
</dbReference>
<dbReference type="GO" id="GO:0006412">
    <property type="term" value="P:translation"/>
    <property type="evidence" value="ECO:0007669"/>
    <property type="project" value="UniProtKB-UniRule"/>
</dbReference>
<dbReference type="CDD" id="cd00432">
    <property type="entry name" value="Ribosomal_L18_L5e"/>
    <property type="match status" value="1"/>
</dbReference>
<dbReference type="FunFam" id="3.30.420.100:FF:000008">
    <property type="entry name" value="50S ribosomal protein L18"/>
    <property type="match status" value="1"/>
</dbReference>
<dbReference type="Gene3D" id="3.30.420.100">
    <property type="match status" value="1"/>
</dbReference>
<dbReference type="HAMAP" id="MF_01337_A">
    <property type="entry name" value="Ribosomal_uL18_A"/>
    <property type="match status" value="1"/>
</dbReference>
<dbReference type="InterPro" id="IPR005485">
    <property type="entry name" value="Rbsml_uL18_euk"/>
</dbReference>
<dbReference type="NCBIfam" id="NF006342">
    <property type="entry name" value="PRK08569.1"/>
    <property type="match status" value="1"/>
</dbReference>
<dbReference type="PANTHER" id="PTHR23410:SF12">
    <property type="entry name" value="LARGE RIBOSOMAL SUBUNIT PROTEIN UL18"/>
    <property type="match status" value="1"/>
</dbReference>
<dbReference type="PANTHER" id="PTHR23410">
    <property type="entry name" value="RIBOSOMAL PROTEIN L5-RELATED"/>
    <property type="match status" value="1"/>
</dbReference>
<dbReference type="Pfam" id="PF17144">
    <property type="entry name" value="Ribosomal_L5e"/>
    <property type="match status" value="2"/>
</dbReference>
<dbReference type="SUPFAM" id="SSF53137">
    <property type="entry name" value="Translational machinery components"/>
    <property type="match status" value="1"/>
</dbReference>
<feature type="chain" id="PRO_0000131405" description="Large ribosomal subunit protein uL18">
    <location>
        <begin position="1"/>
        <end position="195"/>
    </location>
</feature>
<reference key="1">
    <citation type="journal article" date="1996" name="Science">
        <title>Complete genome sequence of the methanogenic archaeon, Methanococcus jannaschii.</title>
        <authorList>
            <person name="Bult C.J."/>
            <person name="White O."/>
            <person name="Olsen G.J."/>
            <person name="Zhou L."/>
            <person name="Fleischmann R.D."/>
            <person name="Sutton G.G."/>
            <person name="Blake J.A."/>
            <person name="FitzGerald L.M."/>
            <person name="Clayton R.A."/>
            <person name="Gocayne J.D."/>
            <person name="Kerlavage A.R."/>
            <person name="Dougherty B.A."/>
            <person name="Tomb J.-F."/>
            <person name="Adams M.D."/>
            <person name="Reich C.I."/>
            <person name="Overbeek R."/>
            <person name="Kirkness E.F."/>
            <person name="Weinstock K.G."/>
            <person name="Merrick J.M."/>
            <person name="Glodek A."/>
            <person name="Scott J.L."/>
            <person name="Geoghagen N.S.M."/>
            <person name="Weidman J.F."/>
            <person name="Fuhrmann J.L."/>
            <person name="Nguyen D."/>
            <person name="Utterback T.R."/>
            <person name="Kelley J.M."/>
            <person name="Peterson J.D."/>
            <person name="Sadow P.W."/>
            <person name="Hanna M.C."/>
            <person name="Cotton M.D."/>
            <person name="Roberts K.M."/>
            <person name="Hurst M.A."/>
            <person name="Kaine B.P."/>
            <person name="Borodovsky M."/>
            <person name="Klenk H.-P."/>
            <person name="Fraser C.M."/>
            <person name="Smith H.O."/>
            <person name="Woese C.R."/>
            <person name="Venter J.C."/>
        </authorList>
    </citation>
    <scope>NUCLEOTIDE SEQUENCE [LARGE SCALE GENOMIC DNA]</scope>
    <source>
        <strain>ATCC 43067 / DSM 2661 / JAL-1 / JCM 10045 / NBRC 100440</strain>
    </source>
</reference>
<sequence>MATGPTYRVKFRRRREAKTDYRKRLKLLLSRKPRLVARRTLNHCIAQIVLYDEKGDKTVVSAHSRELIKLGYKGHTGNLPSAYLTGYLLGKKALAKGYTEAVLDIGLHRATKGNAIFAILKGALDAGMEIPHGEEILPSEERIRGEHIKAYAEMLKEQDEERYKKQFSKYLEKGLEPEKLPEHFEEIKAKIDSMF</sequence>
<evidence type="ECO:0000255" key="1">
    <source>
        <dbReference type="HAMAP-Rule" id="MF_01337"/>
    </source>
</evidence>
<evidence type="ECO:0000305" key="2"/>